<feature type="chain" id="PRO_1000082843" description="ATP-dependent RNA helicase RhlB">
    <location>
        <begin position="1"/>
        <end position="421"/>
    </location>
</feature>
<feature type="domain" description="Helicase ATP-binding" evidence="1">
    <location>
        <begin position="40"/>
        <end position="219"/>
    </location>
</feature>
<feature type="domain" description="Helicase C-terminal" evidence="1">
    <location>
        <begin position="245"/>
        <end position="390"/>
    </location>
</feature>
<feature type="region of interest" description="Disordered" evidence="2">
    <location>
        <begin position="386"/>
        <end position="421"/>
    </location>
</feature>
<feature type="short sequence motif" description="Q motif">
    <location>
        <begin position="9"/>
        <end position="37"/>
    </location>
</feature>
<feature type="short sequence motif" description="DEAD box">
    <location>
        <begin position="165"/>
        <end position="168"/>
    </location>
</feature>
<feature type="compositionally biased region" description="Low complexity" evidence="2">
    <location>
        <begin position="405"/>
        <end position="414"/>
    </location>
</feature>
<feature type="binding site" evidence="1">
    <location>
        <begin position="53"/>
        <end position="60"/>
    </location>
    <ligand>
        <name>ATP</name>
        <dbReference type="ChEBI" id="CHEBI:30616"/>
    </ligand>
</feature>
<evidence type="ECO:0000255" key="1">
    <source>
        <dbReference type="HAMAP-Rule" id="MF_00661"/>
    </source>
</evidence>
<evidence type="ECO:0000256" key="2">
    <source>
        <dbReference type="SAM" id="MobiDB-lite"/>
    </source>
</evidence>
<gene>
    <name evidence="1" type="primary">rhlB</name>
    <name type="ordered locus">Ent638_4005</name>
</gene>
<sequence>MSKTHLTEQKFSDFALHAKVIEALENKGFHYCTPIQALALPLTLAGRDVAGQAQTGTGKTMAFLTSAFHYLLSNPAMADRKVNQPRALIMAPTRELAVQIHADAEPLAQTTGLKLGLAYGGDGYDKQLKVLESGVDILIGTTGRLIDYAKQNHINLGAIQVVVLDEADRMYDLGFIKDIRWLFRRMPPTPQRLNMLFSATLSYRVRELAFEQMNNAEYVEVEPEQKTGHRIKEELFYPSNEEKMRLLQTLIEEEWPDRAIIFANTKHRCEDIWGHLAADGHRVGLLTGDVAQKKRLRILEDFTRGDLDILVATDVAARGLHIPAVTHVFNYDLPDDCEDYVHRIGRTGRAGASGHSISLACEEYALNLTAIETYIGHSVPQSKYNPDALLSELPPPKRLTRARSGNGPRRTGAPRNRRRPG</sequence>
<dbReference type="EC" id="3.6.4.13" evidence="1"/>
<dbReference type="EMBL" id="CP000653">
    <property type="protein sequence ID" value="ABP62660.1"/>
    <property type="molecule type" value="Genomic_DNA"/>
</dbReference>
<dbReference type="RefSeq" id="WP_015960964.1">
    <property type="nucleotide sequence ID" value="NC_009436.1"/>
</dbReference>
<dbReference type="SMR" id="A4WG30"/>
<dbReference type="STRING" id="399742.Ent638_4005"/>
<dbReference type="KEGG" id="ent:Ent638_4005"/>
<dbReference type="eggNOG" id="COG0513">
    <property type="taxonomic scope" value="Bacteria"/>
</dbReference>
<dbReference type="HOGENOM" id="CLU_003041_1_3_6"/>
<dbReference type="OrthoDB" id="9805696at2"/>
<dbReference type="Proteomes" id="UP000000230">
    <property type="component" value="Chromosome"/>
</dbReference>
<dbReference type="GO" id="GO:0005829">
    <property type="term" value="C:cytosol"/>
    <property type="evidence" value="ECO:0007669"/>
    <property type="project" value="TreeGrafter"/>
</dbReference>
<dbReference type="GO" id="GO:0005524">
    <property type="term" value="F:ATP binding"/>
    <property type="evidence" value="ECO:0007669"/>
    <property type="project" value="UniProtKB-UniRule"/>
</dbReference>
<dbReference type="GO" id="GO:0016887">
    <property type="term" value="F:ATP hydrolysis activity"/>
    <property type="evidence" value="ECO:0007669"/>
    <property type="project" value="RHEA"/>
</dbReference>
<dbReference type="GO" id="GO:0003723">
    <property type="term" value="F:RNA binding"/>
    <property type="evidence" value="ECO:0007669"/>
    <property type="project" value="UniProtKB-UniRule"/>
</dbReference>
<dbReference type="GO" id="GO:0003724">
    <property type="term" value="F:RNA helicase activity"/>
    <property type="evidence" value="ECO:0007669"/>
    <property type="project" value="UniProtKB-UniRule"/>
</dbReference>
<dbReference type="GO" id="GO:0006401">
    <property type="term" value="P:RNA catabolic process"/>
    <property type="evidence" value="ECO:0007669"/>
    <property type="project" value="UniProtKB-UniRule"/>
</dbReference>
<dbReference type="CDD" id="cd00268">
    <property type="entry name" value="DEADc"/>
    <property type="match status" value="1"/>
</dbReference>
<dbReference type="CDD" id="cd18787">
    <property type="entry name" value="SF2_C_DEAD"/>
    <property type="match status" value="1"/>
</dbReference>
<dbReference type="FunFam" id="3.40.50.300:FF:000008">
    <property type="entry name" value="ATP-dependent RNA helicase RhlB"/>
    <property type="match status" value="1"/>
</dbReference>
<dbReference type="FunFam" id="3.40.50.300:FF:000312">
    <property type="entry name" value="ATP-dependent RNA helicase RhlB"/>
    <property type="match status" value="1"/>
</dbReference>
<dbReference type="Gene3D" id="3.40.50.300">
    <property type="entry name" value="P-loop containing nucleotide triphosphate hydrolases"/>
    <property type="match status" value="2"/>
</dbReference>
<dbReference type="HAMAP" id="MF_00661">
    <property type="entry name" value="DEAD_helicase_RhlB"/>
    <property type="match status" value="1"/>
</dbReference>
<dbReference type="InterPro" id="IPR011545">
    <property type="entry name" value="DEAD/DEAH_box_helicase_dom"/>
</dbReference>
<dbReference type="InterPro" id="IPR050079">
    <property type="entry name" value="DEAD_box_RNA_helicase"/>
</dbReference>
<dbReference type="InterPro" id="IPR014001">
    <property type="entry name" value="Helicase_ATP-bd"/>
</dbReference>
<dbReference type="InterPro" id="IPR001650">
    <property type="entry name" value="Helicase_C-like"/>
</dbReference>
<dbReference type="InterPro" id="IPR027417">
    <property type="entry name" value="P-loop_NTPase"/>
</dbReference>
<dbReference type="InterPro" id="IPR000629">
    <property type="entry name" value="RNA-helicase_DEAD-box_CS"/>
</dbReference>
<dbReference type="InterPro" id="IPR023554">
    <property type="entry name" value="RNA_helicase_ATP-dep_RhlB"/>
</dbReference>
<dbReference type="InterPro" id="IPR014014">
    <property type="entry name" value="RNA_helicase_DEAD_Q_motif"/>
</dbReference>
<dbReference type="NCBIfam" id="NF003419">
    <property type="entry name" value="PRK04837.1"/>
    <property type="match status" value="1"/>
</dbReference>
<dbReference type="PANTHER" id="PTHR47959:SF10">
    <property type="entry name" value="ATP-DEPENDENT RNA HELICASE RHLB"/>
    <property type="match status" value="1"/>
</dbReference>
<dbReference type="PANTHER" id="PTHR47959">
    <property type="entry name" value="ATP-DEPENDENT RNA HELICASE RHLE-RELATED"/>
    <property type="match status" value="1"/>
</dbReference>
<dbReference type="Pfam" id="PF00270">
    <property type="entry name" value="DEAD"/>
    <property type="match status" value="1"/>
</dbReference>
<dbReference type="Pfam" id="PF00271">
    <property type="entry name" value="Helicase_C"/>
    <property type="match status" value="1"/>
</dbReference>
<dbReference type="SMART" id="SM00487">
    <property type="entry name" value="DEXDc"/>
    <property type="match status" value="1"/>
</dbReference>
<dbReference type="SMART" id="SM00490">
    <property type="entry name" value="HELICc"/>
    <property type="match status" value="1"/>
</dbReference>
<dbReference type="SUPFAM" id="SSF52540">
    <property type="entry name" value="P-loop containing nucleoside triphosphate hydrolases"/>
    <property type="match status" value="1"/>
</dbReference>
<dbReference type="PROSITE" id="PS00039">
    <property type="entry name" value="DEAD_ATP_HELICASE"/>
    <property type="match status" value="1"/>
</dbReference>
<dbReference type="PROSITE" id="PS51192">
    <property type="entry name" value="HELICASE_ATP_BIND_1"/>
    <property type="match status" value="1"/>
</dbReference>
<dbReference type="PROSITE" id="PS51194">
    <property type="entry name" value="HELICASE_CTER"/>
    <property type="match status" value="1"/>
</dbReference>
<dbReference type="PROSITE" id="PS51195">
    <property type="entry name" value="Q_MOTIF"/>
    <property type="match status" value="1"/>
</dbReference>
<keyword id="KW-0067">ATP-binding</keyword>
<keyword id="KW-0963">Cytoplasm</keyword>
<keyword id="KW-0347">Helicase</keyword>
<keyword id="KW-0378">Hydrolase</keyword>
<keyword id="KW-0547">Nucleotide-binding</keyword>
<keyword id="KW-0694">RNA-binding</keyword>
<organism>
    <name type="scientific">Enterobacter sp. (strain 638)</name>
    <dbReference type="NCBI Taxonomy" id="399742"/>
    <lineage>
        <taxon>Bacteria</taxon>
        <taxon>Pseudomonadati</taxon>
        <taxon>Pseudomonadota</taxon>
        <taxon>Gammaproteobacteria</taxon>
        <taxon>Enterobacterales</taxon>
        <taxon>Enterobacteriaceae</taxon>
        <taxon>Enterobacter</taxon>
    </lineage>
</organism>
<name>RHLB_ENT38</name>
<reference key="1">
    <citation type="journal article" date="2010" name="PLoS Genet.">
        <title>Genome sequence of the plant growth promoting endophytic bacterium Enterobacter sp. 638.</title>
        <authorList>
            <person name="Taghavi S."/>
            <person name="van der Lelie D."/>
            <person name="Hoffman A."/>
            <person name="Zhang Y.B."/>
            <person name="Walla M.D."/>
            <person name="Vangronsveld J."/>
            <person name="Newman L."/>
            <person name="Monchy S."/>
        </authorList>
    </citation>
    <scope>NUCLEOTIDE SEQUENCE [LARGE SCALE GENOMIC DNA]</scope>
    <source>
        <strain>638</strain>
    </source>
</reference>
<accession>A4WG30</accession>
<proteinExistence type="inferred from homology"/>
<protein>
    <recommendedName>
        <fullName evidence="1">ATP-dependent RNA helicase RhlB</fullName>
        <ecNumber evidence="1">3.6.4.13</ecNumber>
    </recommendedName>
</protein>
<comment type="function">
    <text evidence="1">DEAD-box RNA helicase involved in RNA degradation. Has RNA-dependent ATPase activity and unwinds double-stranded RNA.</text>
</comment>
<comment type="catalytic activity">
    <reaction evidence="1">
        <text>ATP + H2O = ADP + phosphate + H(+)</text>
        <dbReference type="Rhea" id="RHEA:13065"/>
        <dbReference type="ChEBI" id="CHEBI:15377"/>
        <dbReference type="ChEBI" id="CHEBI:15378"/>
        <dbReference type="ChEBI" id="CHEBI:30616"/>
        <dbReference type="ChEBI" id="CHEBI:43474"/>
        <dbReference type="ChEBI" id="CHEBI:456216"/>
        <dbReference type="EC" id="3.6.4.13"/>
    </reaction>
</comment>
<comment type="subunit">
    <text evidence="1">Component of the RNA degradosome, which is a multiprotein complex involved in RNA processing and mRNA degradation.</text>
</comment>
<comment type="subcellular location">
    <subcellularLocation>
        <location evidence="1">Cytoplasm</location>
    </subcellularLocation>
</comment>
<comment type="similarity">
    <text evidence="1">Belongs to the DEAD box helicase family. RhlB subfamily.</text>
</comment>